<gene>
    <name type="ordered locus">NMB0796</name>
</gene>
<feature type="chain" id="PRO_0000192493" description="UPF0125 protein NMB0796">
    <location>
        <begin position="1"/>
        <end position="92"/>
    </location>
</feature>
<reference key="1">
    <citation type="journal article" date="2000" name="Science">
        <title>Complete genome sequence of Neisseria meningitidis serogroup B strain MC58.</title>
        <authorList>
            <person name="Tettelin H."/>
            <person name="Saunders N.J."/>
            <person name="Heidelberg J.F."/>
            <person name="Jeffries A.C."/>
            <person name="Nelson K.E."/>
            <person name="Eisen J.A."/>
            <person name="Ketchum K.A."/>
            <person name="Hood D.W."/>
            <person name="Peden J.F."/>
            <person name="Dodson R.J."/>
            <person name="Nelson W.C."/>
            <person name="Gwinn M.L."/>
            <person name="DeBoy R.T."/>
            <person name="Peterson J.D."/>
            <person name="Hickey E.K."/>
            <person name="Haft D.H."/>
            <person name="Salzberg S.L."/>
            <person name="White O."/>
            <person name="Fleischmann R.D."/>
            <person name="Dougherty B.A."/>
            <person name="Mason T.M."/>
            <person name="Ciecko A."/>
            <person name="Parksey D.S."/>
            <person name="Blair E."/>
            <person name="Cittone H."/>
            <person name="Clark E.B."/>
            <person name="Cotton M.D."/>
            <person name="Utterback T.R."/>
            <person name="Khouri H.M."/>
            <person name="Qin H."/>
            <person name="Vamathevan J.J."/>
            <person name="Gill J."/>
            <person name="Scarlato V."/>
            <person name="Masignani V."/>
            <person name="Pizza M."/>
            <person name="Grandi G."/>
            <person name="Sun L."/>
            <person name="Smith H.O."/>
            <person name="Fraser C.M."/>
            <person name="Moxon E.R."/>
            <person name="Rappuoli R."/>
            <person name="Venter J.C."/>
        </authorList>
    </citation>
    <scope>NUCLEOTIDE SEQUENCE [LARGE SCALE GENOMIC DNA]</scope>
    <source>
        <strain>ATCC BAA-335 / MC58</strain>
    </source>
</reference>
<accession>P67259</accession>
<accession>Q9JRC2</accession>
<proteinExistence type="inferred from homology"/>
<comment type="similarity">
    <text evidence="1">Belongs to the UPF0125 (RnfH) family.</text>
</comment>
<name>Y796_NEIMB</name>
<keyword id="KW-1185">Reference proteome</keyword>
<organism>
    <name type="scientific">Neisseria meningitidis serogroup B (strain ATCC BAA-335 / MC58)</name>
    <dbReference type="NCBI Taxonomy" id="122586"/>
    <lineage>
        <taxon>Bacteria</taxon>
        <taxon>Pseudomonadati</taxon>
        <taxon>Pseudomonadota</taxon>
        <taxon>Betaproteobacteria</taxon>
        <taxon>Neisseriales</taxon>
        <taxon>Neisseriaceae</taxon>
        <taxon>Neisseria</taxon>
    </lineage>
</organism>
<evidence type="ECO:0000305" key="1"/>
<sequence length="92" mass="10344">MLEIEIVYGLPDRQVLKTMQLAEGTTVRAAALQSGLDGIFEDLNLHSAPLGIFGKAVKDDTPLRDGDRIEVYRPLLIDPKEARRKRVQNQEE</sequence>
<protein>
    <recommendedName>
        <fullName>UPF0125 protein NMB0796</fullName>
    </recommendedName>
</protein>
<dbReference type="EMBL" id="AE002098">
    <property type="protein sequence ID" value="AAF41209.1"/>
    <property type="molecule type" value="Genomic_DNA"/>
</dbReference>
<dbReference type="PIR" id="C81157">
    <property type="entry name" value="C81157"/>
</dbReference>
<dbReference type="RefSeq" id="NP_273838.1">
    <property type="nucleotide sequence ID" value="NC_003112.2"/>
</dbReference>
<dbReference type="RefSeq" id="WP_002217575.1">
    <property type="nucleotide sequence ID" value="NC_003112.2"/>
</dbReference>
<dbReference type="SMR" id="P67259"/>
<dbReference type="FunCoup" id="P67259">
    <property type="interactions" value="82"/>
</dbReference>
<dbReference type="STRING" id="122586.NMB0796"/>
<dbReference type="PaxDb" id="122586-NMB0796"/>
<dbReference type="KEGG" id="nme:NMB0796"/>
<dbReference type="PATRIC" id="fig|122586.8.peg.1008"/>
<dbReference type="HOGENOM" id="CLU_150721_1_0_4"/>
<dbReference type="InParanoid" id="P67259"/>
<dbReference type="OrthoDB" id="9796575at2"/>
<dbReference type="Proteomes" id="UP000000425">
    <property type="component" value="Chromosome"/>
</dbReference>
<dbReference type="Gene3D" id="3.10.20.280">
    <property type="entry name" value="RnfH-like"/>
    <property type="match status" value="1"/>
</dbReference>
<dbReference type="HAMAP" id="MF_00460">
    <property type="entry name" value="UPF0125_RnfH"/>
    <property type="match status" value="1"/>
</dbReference>
<dbReference type="InterPro" id="IPR016155">
    <property type="entry name" value="Mopterin_synth/thiamin_S_b"/>
</dbReference>
<dbReference type="InterPro" id="IPR005346">
    <property type="entry name" value="RnfH"/>
</dbReference>
<dbReference type="InterPro" id="IPR037021">
    <property type="entry name" value="RnfH_sf"/>
</dbReference>
<dbReference type="NCBIfam" id="NF002490">
    <property type="entry name" value="PRK01777.1"/>
    <property type="match status" value="1"/>
</dbReference>
<dbReference type="PANTHER" id="PTHR37483">
    <property type="entry name" value="UPF0125 PROTEIN RATB"/>
    <property type="match status" value="1"/>
</dbReference>
<dbReference type="PANTHER" id="PTHR37483:SF1">
    <property type="entry name" value="UPF0125 PROTEIN RATB"/>
    <property type="match status" value="1"/>
</dbReference>
<dbReference type="Pfam" id="PF03658">
    <property type="entry name" value="Ub-RnfH"/>
    <property type="match status" value="1"/>
</dbReference>
<dbReference type="SUPFAM" id="SSF54285">
    <property type="entry name" value="MoaD/ThiS"/>
    <property type="match status" value="1"/>
</dbReference>